<keyword id="KW-0007">Acetylation</keyword>
<keyword id="KW-0067">ATP-binding</keyword>
<keyword id="KW-0963">Cytoplasm</keyword>
<keyword id="KW-0206">Cytoskeleton</keyword>
<keyword id="KW-0378">Hydrolase</keyword>
<keyword id="KW-0514">Muscle protein</keyword>
<keyword id="KW-0547">Nucleotide-binding</keyword>
<keyword id="KW-1185">Reference proteome</keyword>
<protein>
    <recommendedName>
        <fullName>Actin, muscle</fullName>
        <ecNumber evidence="2">3.6.4.-</ecNumber>
    </recommendedName>
</protein>
<evidence type="ECO:0000250" key="1"/>
<evidence type="ECO:0000250" key="2">
    <source>
        <dbReference type="UniProtKB" id="P68137"/>
    </source>
</evidence>
<evidence type="ECO:0000305" key="3"/>
<proteinExistence type="inferred from homology"/>
<name>ACTM_STRPU</name>
<dbReference type="EC" id="3.6.4.-" evidence="2"/>
<dbReference type="EMBL" id="X05739">
    <property type="protein sequence ID" value="CAA29199.1"/>
    <property type="molecule type" value="Genomic_DNA"/>
</dbReference>
<dbReference type="EMBL" id="X05740">
    <property type="protein sequence ID" value="CAA29199.1"/>
    <property type="status" value="JOINED"/>
    <property type="molecule type" value="Genomic_DNA"/>
</dbReference>
<dbReference type="EMBL" id="X05741">
    <property type="protein sequence ID" value="CAA29199.1"/>
    <property type="status" value="JOINED"/>
    <property type="molecule type" value="Genomic_DNA"/>
</dbReference>
<dbReference type="EMBL" id="X05742">
    <property type="protein sequence ID" value="CAA29199.1"/>
    <property type="status" value="JOINED"/>
    <property type="molecule type" value="Genomic_DNA"/>
</dbReference>
<dbReference type="EMBL" id="X05743">
    <property type="protein sequence ID" value="CAA29199.1"/>
    <property type="status" value="JOINED"/>
    <property type="molecule type" value="Genomic_DNA"/>
</dbReference>
<dbReference type="EMBL" id="X07085">
    <property type="protein sequence ID" value="CAA30118.1"/>
    <property type="molecule type" value="Genomic_DNA"/>
</dbReference>
<dbReference type="PIR" id="A29664">
    <property type="entry name" value="A29664"/>
</dbReference>
<dbReference type="PIR" id="S00706">
    <property type="entry name" value="S00706"/>
</dbReference>
<dbReference type="RefSeq" id="NP_001119777.1">
    <property type="nucleotide sequence ID" value="NM_001126305.1"/>
</dbReference>
<dbReference type="STRING" id="7668.P12431"/>
<dbReference type="GeneID" id="581500"/>
<dbReference type="KEGG" id="spu:581500"/>
<dbReference type="HOGENOM" id="CLU_027965_0_2_1"/>
<dbReference type="InParanoid" id="P12431"/>
<dbReference type="OrthoDB" id="10249208at2759"/>
<dbReference type="Proteomes" id="UP000007110">
    <property type="component" value="Unassembled WGS sequence"/>
</dbReference>
<dbReference type="GO" id="GO:0015629">
    <property type="term" value="C:actin cytoskeleton"/>
    <property type="evidence" value="ECO:0000318"/>
    <property type="project" value="GO_Central"/>
</dbReference>
<dbReference type="GO" id="GO:0005737">
    <property type="term" value="C:cytoplasm"/>
    <property type="evidence" value="ECO:0007669"/>
    <property type="project" value="UniProtKB-KW"/>
</dbReference>
<dbReference type="GO" id="GO:0005524">
    <property type="term" value="F:ATP binding"/>
    <property type="evidence" value="ECO:0007669"/>
    <property type="project" value="UniProtKB-KW"/>
</dbReference>
<dbReference type="GO" id="GO:0016787">
    <property type="term" value="F:hydrolase activity"/>
    <property type="evidence" value="ECO:0007669"/>
    <property type="project" value="UniProtKB-KW"/>
</dbReference>
<dbReference type="CDD" id="cd10224">
    <property type="entry name" value="ASKHA_NBD_actin"/>
    <property type="match status" value="1"/>
</dbReference>
<dbReference type="FunFam" id="2.30.36.70:FF:000001">
    <property type="entry name" value="Actin, alpha skeletal muscle"/>
    <property type="match status" value="1"/>
</dbReference>
<dbReference type="FunFam" id="3.30.420.40:FF:000131">
    <property type="entry name" value="Actin, alpha skeletal muscle"/>
    <property type="match status" value="1"/>
</dbReference>
<dbReference type="FunFam" id="3.30.420.40:FF:000291">
    <property type="entry name" value="Actin, alpha skeletal muscle"/>
    <property type="match status" value="1"/>
</dbReference>
<dbReference type="FunFam" id="3.90.640.10:FF:000047">
    <property type="entry name" value="Actin, alpha skeletal muscle"/>
    <property type="match status" value="1"/>
</dbReference>
<dbReference type="FunFam" id="3.30.420.40:FF:000058">
    <property type="entry name" value="Putative actin-related protein 5"/>
    <property type="match status" value="1"/>
</dbReference>
<dbReference type="Gene3D" id="3.30.420.40">
    <property type="match status" value="2"/>
</dbReference>
<dbReference type="Gene3D" id="3.90.640.10">
    <property type="entry name" value="Actin, Chain A, domain 4"/>
    <property type="match status" value="1"/>
</dbReference>
<dbReference type="InterPro" id="IPR004000">
    <property type="entry name" value="Actin"/>
</dbReference>
<dbReference type="InterPro" id="IPR020902">
    <property type="entry name" value="Actin/actin-like_CS"/>
</dbReference>
<dbReference type="InterPro" id="IPR004001">
    <property type="entry name" value="Actin_CS"/>
</dbReference>
<dbReference type="InterPro" id="IPR043129">
    <property type="entry name" value="ATPase_NBD"/>
</dbReference>
<dbReference type="PANTHER" id="PTHR11937">
    <property type="entry name" value="ACTIN"/>
    <property type="match status" value="1"/>
</dbReference>
<dbReference type="Pfam" id="PF00022">
    <property type="entry name" value="Actin"/>
    <property type="match status" value="1"/>
</dbReference>
<dbReference type="PRINTS" id="PR00190">
    <property type="entry name" value="ACTIN"/>
</dbReference>
<dbReference type="SMART" id="SM00268">
    <property type="entry name" value="ACTIN"/>
    <property type="match status" value="1"/>
</dbReference>
<dbReference type="SUPFAM" id="SSF53067">
    <property type="entry name" value="Actin-like ATPase domain"/>
    <property type="match status" value="2"/>
</dbReference>
<dbReference type="PROSITE" id="PS00406">
    <property type="entry name" value="ACTINS_1"/>
    <property type="match status" value="1"/>
</dbReference>
<dbReference type="PROSITE" id="PS01132">
    <property type="entry name" value="ACTINS_ACT_LIKE"/>
    <property type="match status" value="1"/>
</dbReference>
<organism>
    <name type="scientific">Strongylocentrotus purpuratus</name>
    <name type="common">Purple sea urchin</name>
    <dbReference type="NCBI Taxonomy" id="7668"/>
    <lineage>
        <taxon>Eukaryota</taxon>
        <taxon>Metazoa</taxon>
        <taxon>Echinodermata</taxon>
        <taxon>Eleutherozoa</taxon>
        <taxon>Echinozoa</taxon>
        <taxon>Echinoidea</taxon>
        <taxon>Euechinoidea</taxon>
        <taxon>Echinacea</taxon>
        <taxon>Camarodonta</taxon>
        <taxon>Echinidea</taxon>
        <taxon>Strongylocentrotidae</taxon>
        <taxon>Strongylocentrotus</taxon>
    </lineage>
</organism>
<accession>P12431</accession>
<feature type="propeptide" id="PRO_0000000734" description="Removed in mature form">
    <location>
        <begin position="1"/>
        <end position="2"/>
    </location>
</feature>
<feature type="chain" id="PRO_0000000735" description="Actin, muscle">
    <location>
        <begin position="3"/>
        <end position="374"/>
    </location>
</feature>
<feature type="modified residue" description="N-acetylaspartate" evidence="1">
    <location>
        <position position="3"/>
    </location>
</feature>
<reference key="1">
    <citation type="journal article" date="1987" name="J. Mol. Evol.">
        <title>The sequence of a sea urchin muscle actin gene suggests a gene conversion with a cytoskeletal actin gene.</title>
        <authorList>
            <person name="Crain W.R. Jr."/>
            <person name="Boshar M.F."/>
            <person name="Cooper A.D."/>
            <person name="Durica D.S."/>
            <person name="Nagy A."/>
            <person name="Steffen D."/>
        </authorList>
    </citation>
    <scope>NUCLEOTIDE SEQUENCE [GENOMIC DNA]</scope>
</reference>
<reference key="2">
    <citation type="journal article" date="1988" name="Nucleic Acids Res.">
        <title>Identification of a repeated sequence in the genome of the sea urchin which is transcribed by RNA polymerase III and contains the features of a retroposon.</title>
        <authorList>
            <person name="Nisson P.E."/>
            <person name="Hickey R.J."/>
            <person name="Boshar M.F."/>
            <person name="Crain W.R. Jr."/>
        </authorList>
    </citation>
    <scope>NUCLEOTIDE SEQUENCE [GENOMIC DNA] OF 1-15</scope>
</reference>
<comment type="function">
    <text>Actins are highly conserved proteins that are involved in various types of cell motility and are ubiquitously expressed in all eukaryotic cells.</text>
</comment>
<comment type="catalytic activity">
    <reaction evidence="2">
        <text>ATP + H2O = ADP + phosphate + H(+)</text>
        <dbReference type="Rhea" id="RHEA:13065"/>
        <dbReference type="ChEBI" id="CHEBI:15377"/>
        <dbReference type="ChEBI" id="CHEBI:15378"/>
        <dbReference type="ChEBI" id="CHEBI:30616"/>
        <dbReference type="ChEBI" id="CHEBI:43474"/>
        <dbReference type="ChEBI" id="CHEBI:456216"/>
    </reaction>
</comment>
<comment type="subcellular location">
    <subcellularLocation>
        <location>Cytoplasm</location>
        <location>Cytoskeleton</location>
    </subcellularLocation>
</comment>
<comment type="similarity">
    <text evidence="3">Belongs to the actin family.</text>
</comment>
<sequence length="374" mass="41557">MCDEDVAALVVDNGSGMCKTGFAGDDAPRAVFPSIVGRPRHHGVMVGMGQKDSYVGDEAQSKRGILTLKYPIEHGIVTNWDDMEKIWHHTFYNELRVAPEEHPVLLTEAPLNPKANREKMTQIMFETFNAPAMYVAIKAVLSLYASGRTTGIXXXXGDGVTHTVPIYEGYALPHAILRLDLAGRDLTDYLMKILTERGYSFTTTAEREIVRDIKEKLCYTALNFEREMATAAASSSLEKSYELPDGQVITIGNERFRCPETLFEPAFIGMESAGIHETTYNSIMKCDIDIRKDLYANTVLSGGTSMYPGIADRMQKEITALAPSSVKIKIIAPPERKYSVWIGGSILASLSTFQQMWISKQEYSGASIVHRKCF</sequence>